<feature type="chain" id="PRO_1000190996" description="Ketol-acid reductoisomerase (NADP(+))">
    <location>
        <begin position="1"/>
        <end position="340"/>
    </location>
</feature>
<feature type="domain" description="KARI N-terminal Rossmann" evidence="2">
    <location>
        <begin position="3"/>
        <end position="182"/>
    </location>
</feature>
<feature type="domain" description="KARI C-terminal knotted" evidence="3">
    <location>
        <begin position="183"/>
        <end position="328"/>
    </location>
</feature>
<feature type="active site" evidence="1">
    <location>
        <position position="108"/>
    </location>
</feature>
<feature type="binding site" evidence="1">
    <location>
        <begin position="26"/>
        <end position="29"/>
    </location>
    <ligand>
        <name>NADP(+)</name>
        <dbReference type="ChEBI" id="CHEBI:58349"/>
    </ligand>
</feature>
<feature type="binding site" evidence="1">
    <location>
        <position position="49"/>
    </location>
    <ligand>
        <name>NADP(+)</name>
        <dbReference type="ChEBI" id="CHEBI:58349"/>
    </ligand>
</feature>
<feature type="binding site" evidence="1">
    <location>
        <position position="53"/>
    </location>
    <ligand>
        <name>NADP(+)</name>
        <dbReference type="ChEBI" id="CHEBI:58349"/>
    </ligand>
</feature>
<feature type="binding site" evidence="1">
    <location>
        <begin position="83"/>
        <end position="86"/>
    </location>
    <ligand>
        <name>NADP(+)</name>
        <dbReference type="ChEBI" id="CHEBI:58349"/>
    </ligand>
</feature>
<feature type="binding site" evidence="1">
    <location>
        <position position="134"/>
    </location>
    <ligand>
        <name>NADP(+)</name>
        <dbReference type="ChEBI" id="CHEBI:58349"/>
    </ligand>
</feature>
<feature type="binding site" evidence="1">
    <location>
        <position position="191"/>
    </location>
    <ligand>
        <name>Mg(2+)</name>
        <dbReference type="ChEBI" id="CHEBI:18420"/>
        <label>1</label>
    </ligand>
</feature>
<feature type="binding site" evidence="1">
    <location>
        <position position="191"/>
    </location>
    <ligand>
        <name>Mg(2+)</name>
        <dbReference type="ChEBI" id="CHEBI:18420"/>
        <label>2</label>
    </ligand>
</feature>
<feature type="binding site" evidence="1">
    <location>
        <position position="195"/>
    </location>
    <ligand>
        <name>Mg(2+)</name>
        <dbReference type="ChEBI" id="CHEBI:18420"/>
        <label>1</label>
    </ligand>
</feature>
<feature type="binding site" evidence="1">
    <location>
        <position position="227"/>
    </location>
    <ligand>
        <name>Mg(2+)</name>
        <dbReference type="ChEBI" id="CHEBI:18420"/>
        <label>2</label>
    </ligand>
</feature>
<feature type="binding site" evidence="1">
    <location>
        <position position="231"/>
    </location>
    <ligand>
        <name>Mg(2+)</name>
        <dbReference type="ChEBI" id="CHEBI:18420"/>
        <label>2</label>
    </ligand>
</feature>
<feature type="binding site" evidence="1">
    <location>
        <position position="252"/>
    </location>
    <ligand>
        <name>substrate</name>
    </ligand>
</feature>
<comment type="function">
    <text evidence="1">Involved in the biosynthesis of branched-chain amino acids (BCAA). Catalyzes an alkyl-migration followed by a ketol-acid reduction of (S)-2-acetolactate (S2AL) to yield (R)-2,3-dihydroxy-isovalerate. In the isomerase reaction, S2AL is rearranged via a Mg-dependent methyl migration to produce 3-hydroxy-3-methyl-2-ketobutyrate (HMKB). In the reductase reaction, this 2-ketoacid undergoes a metal-dependent reduction by NADPH to yield (R)-2,3-dihydroxy-isovalerate.</text>
</comment>
<comment type="catalytic activity">
    <reaction evidence="1">
        <text>(2R)-2,3-dihydroxy-3-methylbutanoate + NADP(+) = (2S)-2-acetolactate + NADPH + H(+)</text>
        <dbReference type="Rhea" id="RHEA:22068"/>
        <dbReference type="ChEBI" id="CHEBI:15378"/>
        <dbReference type="ChEBI" id="CHEBI:49072"/>
        <dbReference type="ChEBI" id="CHEBI:57783"/>
        <dbReference type="ChEBI" id="CHEBI:58349"/>
        <dbReference type="ChEBI" id="CHEBI:58476"/>
        <dbReference type="EC" id="1.1.1.86"/>
    </reaction>
</comment>
<comment type="catalytic activity">
    <reaction evidence="1">
        <text>(2R,3R)-2,3-dihydroxy-3-methylpentanoate + NADP(+) = (S)-2-ethyl-2-hydroxy-3-oxobutanoate + NADPH + H(+)</text>
        <dbReference type="Rhea" id="RHEA:13493"/>
        <dbReference type="ChEBI" id="CHEBI:15378"/>
        <dbReference type="ChEBI" id="CHEBI:49256"/>
        <dbReference type="ChEBI" id="CHEBI:49258"/>
        <dbReference type="ChEBI" id="CHEBI:57783"/>
        <dbReference type="ChEBI" id="CHEBI:58349"/>
        <dbReference type="EC" id="1.1.1.86"/>
    </reaction>
</comment>
<comment type="cofactor">
    <cofactor evidence="1">
        <name>Mg(2+)</name>
        <dbReference type="ChEBI" id="CHEBI:18420"/>
    </cofactor>
    <text evidence="1">Binds 2 magnesium ions per subunit.</text>
</comment>
<comment type="pathway">
    <text evidence="1">Amino-acid biosynthesis; L-isoleucine biosynthesis; L-isoleucine from 2-oxobutanoate: step 2/4.</text>
</comment>
<comment type="pathway">
    <text evidence="1">Amino-acid biosynthesis; L-valine biosynthesis; L-valine from pyruvate: step 2/4.</text>
</comment>
<comment type="similarity">
    <text evidence="1">Belongs to the ketol-acid reductoisomerase family.</text>
</comment>
<dbReference type="EC" id="1.1.1.86" evidence="1"/>
<dbReference type="EMBL" id="CP000918">
    <property type="protein sequence ID" value="ACO16435.1"/>
    <property type="molecule type" value="Genomic_DNA"/>
</dbReference>
<dbReference type="RefSeq" id="WP_000218054.1">
    <property type="nucleotide sequence ID" value="NC_012468.1"/>
</dbReference>
<dbReference type="SMR" id="C1C5I0"/>
<dbReference type="GeneID" id="45652102"/>
<dbReference type="KEGG" id="snm:SP70585_0516"/>
<dbReference type="HOGENOM" id="CLU_033821_0_1_9"/>
<dbReference type="UniPathway" id="UPA00047">
    <property type="reaction ID" value="UER00056"/>
</dbReference>
<dbReference type="UniPathway" id="UPA00049">
    <property type="reaction ID" value="UER00060"/>
</dbReference>
<dbReference type="Proteomes" id="UP000002211">
    <property type="component" value="Chromosome"/>
</dbReference>
<dbReference type="GO" id="GO:0005829">
    <property type="term" value="C:cytosol"/>
    <property type="evidence" value="ECO:0007669"/>
    <property type="project" value="TreeGrafter"/>
</dbReference>
<dbReference type="GO" id="GO:0004455">
    <property type="term" value="F:ketol-acid reductoisomerase activity"/>
    <property type="evidence" value="ECO:0007669"/>
    <property type="project" value="UniProtKB-UniRule"/>
</dbReference>
<dbReference type="GO" id="GO:0000287">
    <property type="term" value="F:magnesium ion binding"/>
    <property type="evidence" value="ECO:0007669"/>
    <property type="project" value="UniProtKB-UniRule"/>
</dbReference>
<dbReference type="GO" id="GO:0050661">
    <property type="term" value="F:NADP binding"/>
    <property type="evidence" value="ECO:0007669"/>
    <property type="project" value="InterPro"/>
</dbReference>
<dbReference type="GO" id="GO:0009097">
    <property type="term" value="P:isoleucine biosynthetic process"/>
    <property type="evidence" value="ECO:0007669"/>
    <property type="project" value="UniProtKB-UniRule"/>
</dbReference>
<dbReference type="GO" id="GO:0009099">
    <property type="term" value="P:L-valine biosynthetic process"/>
    <property type="evidence" value="ECO:0007669"/>
    <property type="project" value="UniProtKB-UniRule"/>
</dbReference>
<dbReference type="FunFam" id="3.40.50.720:FF:000023">
    <property type="entry name" value="Ketol-acid reductoisomerase (NADP(+))"/>
    <property type="match status" value="1"/>
</dbReference>
<dbReference type="Gene3D" id="6.10.240.10">
    <property type="match status" value="1"/>
</dbReference>
<dbReference type="Gene3D" id="3.40.50.720">
    <property type="entry name" value="NAD(P)-binding Rossmann-like Domain"/>
    <property type="match status" value="1"/>
</dbReference>
<dbReference type="HAMAP" id="MF_00435">
    <property type="entry name" value="IlvC"/>
    <property type="match status" value="1"/>
</dbReference>
<dbReference type="InterPro" id="IPR008927">
    <property type="entry name" value="6-PGluconate_DH-like_C_sf"/>
</dbReference>
<dbReference type="InterPro" id="IPR013023">
    <property type="entry name" value="KARI"/>
</dbReference>
<dbReference type="InterPro" id="IPR000506">
    <property type="entry name" value="KARI_C"/>
</dbReference>
<dbReference type="InterPro" id="IPR013116">
    <property type="entry name" value="KARI_N"/>
</dbReference>
<dbReference type="InterPro" id="IPR014359">
    <property type="entry name" value="KARI_prok"/>
</dbReference>
<dbReference type="InterPro" id="IPR036291">
    <property type="entry name" value="NAD(P)-bd_dom_sf"/>
</dbReference>
<dbReference type="NCBIfam" id="TIGR00465">
    <property type="entry name" value="ilvC"/>
    <property type="match status" value="1"/>
</dbReference>
<dbReference type="NCBIfam" id="NF004017">
    <property type="entry name" value="PRK05479.1"/>
    <property type="match status" value="1"/>
</dbReference>
<dbReference type="NCBIfam" id="NF009940">
    <property type="entry name" value="PRK13403.1"/>
    <property type="match status" value="1"/>
</dbReference>
<dbReference type="PANTHER" id="PTHR21371">
    <property type="entry name" value="KETOL-ACID REDUCTOISOMERASE, MITOCHONDRIAL"/>
    <property type="match status" value="1"/>
</dbReference>
<dbReference type="PANTHER" id="PTHR21371:SF1">
    <property type="entry name" value="KETOL-ACID REDUCTOISOMERASE, MITOCHONDRIAL"/>
    <property type="match status" value="1"/>
</dbReference>
<dbReference type="Pfam" id="PF01450">
    <property type="entry name" value="KARI_C"/>
    <property type="match status" value="1"/>
</dbReference>
<dbReference type="Pfam" id="PF07991">
    <property type="entry name" value="KARI_N"/>
    <property type="match status" value="1"/>
</dbReference>
<dbReference type="PIRSF" id="PIRSF000116">
    <property type="entry name" value="IlvC_gammaproteo"/>
    <property type="match status" value="1"/>
</dbReference>
<dbReference type="SUPFAM" id="SSF48179">
    <property type="entry name" value="6-phosphogluconate dehydrogenase C-terminal domain-like"/>
    <property type="match status" value="1"/>
</dbReference>
<dbReference type="SUPFAM" id="SSF51735">
    <property type="entry name" value="NAD(P)-binding Rossmann-fold domains"/>
    <property type="match status" value="1"/>
</dbReference>
<dbReference type="PROSITE" id="PS51851">
    <property type="entry name" value="KARI_C"/>
    <property type="match status" value="1"/>
</dbReference>
<dbReference type="PROSITE" id="PS51850">
    <property type="entry name" value="KARI_N"/>
    <property type="match status" value="1"/>
</dbReference>
<accession>C1C5I0</accession>
<sequence length="340" mass="37350">MTVQMEYEKDVKVAALDGKKIAVIGYGSQGHAHAQNLRDSGRDVIIGVRPGKSFDKAKEDGFDTYTVAEATKLADVIMILAPDEIQQELYEAEIAPNLEAGNAVGFAHGFNIHFEFIKVPADVDVFMCAPKGPGHLVRRTYEEGFGVPALYAVYQDATGNAKNIAMDWCKGVGAARVGLLETTYKEETEEDLFGEQAVLCGGLTALIEAGFEVLTEAGYAPELAYFEVLHEMKLIVDLIYEGGFKKMRQSISNTAEYGDYVSGPRVITEQVKENMKAVLADIQNGKFANDFVNDYKAGRPKLTAYREQAANLEIEKVGAELRKAMPFVGKNDDDAFKIYN</sequence>
<reference key="1">
    <citation type="journal article" date="2010" name="Genome Biol.">
        <title>Structure and dynamics of the pan-genome of Streptococcus pneumoniae and closely related species.</title>
        <authorList>
            <person name="Donati C."/>
            <person name="Hiller N.L."/>
            <person name="Tettelin H."/>
            <person name="Muzzi A."/>
            <person name="Croucher N.J."/>
            <person name="Angiuoli S.V."/>
            <person name="Oggioni M."/>
            <person name="Dunning Hotopp J.C."/>
            <person name="Hu F.Z."/>
            <person name="Riley D.R."/>
            <person name="Covacci A."/>
            <person name="Mitchell T.J."/>
            <person name="Bentley S.D."/>
            <person name="Kilian M."/>
            <person name="Ehrlich G.D."/>
            <person name="Rappuoli R."/>
            <person name="Moxon E.R."/>
            <person name="Masignani V."/>
        </authorList>
    </citation>
    <scope>NUCLEOTIDE SEQUENCE [LARGE SCALE GENOMIC DNA]</scope>
    <source>
        <strain>70585</strain>
    </source>
</reference>
<gene>
    <name evidence="1" type="primary">ilvC</name>
    <name type="ordered locus">SP70585_0516</name>
</gene>
<protein>
    <recommendedName>
        <fullName evidence="1">Ketol-acid reductoisomerase (NADP(+))</fullName>
        <shortName evidence="1">KARI</shortName>
        <ecNumber evidence="1">1.1.1.86</ecNumber>
    </recommendedName>
    <alternativeName>
        <fullName evidence="1">Acetohydroxy-acid isomeroreductase</fullName>
        <shortName evidence="1">AHIR</shortName>
    </alternativeName>
    <alternativeName>
        <fullName evidence="1">Alpha-keto-beta-hydroxylacyl reductoisomerase</fullName>
    </alternativeName>
    <alternativeName>
        <fullName evidence="1">Ketol-acid reductoisomerase type 1</fullName>
    </alternativeName>
    <alternativeName>
        <fullName evidence="1">Ketol-acid reductoisomerase type I</fullName>
    </alternativeName>
</protein>
<keyword id="KW-0028">Amino-acid biosynthesis</keyword>
<keyword id="KW-0100">Branched-chain amino acid biosynthesis</keyword>
<keyword id="KW-0460">Magnesium</keyword>
<keyword id="KW-0479">Metal-binding</keyword>
<keyword id="KW-0521">NADP</keyword>
<keyword id="KW-0560">Oxidoreductase</keyword>
<proteinExistence type="inferred from homology"/>
<organism>
    <name type="scientific">Streptococcus pneumoniae (strain 70585)</name>
    <dbReference type="NCBI Taxonomy" id="488221"/>
    <lineage>
        <taxon>Bacteria</taxon>
        <taxon>Bacillati</taxon>
        <taxon>Bacillota</taxon>
        <taxon>Bacilli</taxon>
        <taxon>Lactobacillales</taxon>
        <taxon>Streptococcaceae</taxon>
        <taxon>Streptococcus</taxon>
    </lineage>
</organism>
<name>ILVC_STRP7</name>
<evidence type="ECO:0000255" key="1">
    <source>
        <dbReference type="HAMAP-Rule" id="MF_00435"/>
    </source>
</evidence>
<evidence type="ECO:0000255" key="2">
    <source>
        <dbReference type="PROSITE-ProRule" id="PRU01197"/>
    </source>
</evidence>
<evidence type="ECO:0000255" key="3">
    <source>
        <dbReference type="PROSITE-ProRule" id="PRU01198"/>
    </source>
</evidence>